<feature type="propeptide" id="PRO_0000316079" evidence="1">
    <location>
        <begin position="1"/>
        <end position="10"/>
    </location>
</feature>
<feature type="chain" id="PRO_1000025978" description="Photosystem II reaction center protein K" evidence="1">
    <location>
        <begin position="11"/>
        <end position="47"/>
    </location>
</feature>
<feature type="transmembrane region" description="Helical" evidence="1">
    <location>
        <begin position="26"/>
        <end position="46"/>
    </location>
</feature>
<gene>
    <name evidence="1" type="primary">psbK</name>
    <name type="ordered locus">NATL1_03511</name>
</gene>
<organism>
    <name type="scientific">Prochlorococcus marinus (strain NATL1A)</name>
    <dbReference type="NCBI Taxonomy" id="167555"/>
    <lineage>
        <taxon>Bacteria</taxon>
        <taxon>Bacillati</taxon>
        <taxon>Cyanobacteriota</taxon>
        <taxon>Cyanophyceae</taxon>
        <taxon>Synechococcales</taxon>
        <taxon>Prochlorococcaceae</taxon>
        <taxon>Prochlorococcus</taxon>
    </lineage>
</organism>
<protein>
    <recommendedName>
        <fullName evidence="1">Photosystem II reaction center protein K</fullName>
        <shortName evidence="1">PSII-K</shortName>
    </recommendedName>
</protein>
<proteinExistence type="inferred from homology"/>
<keyword id="KW-0472">Membrane</keyword>
<keyword id="KW-0602">Photosynthesis</keyword>
<keyword id="KW-0604">Photosystem II</keyword>
<keyword id="KW-0674">Reaction center</keyword>
<keyword id="KW-0793">Thylakoid</keyword>
<keyword id="KW-0812">Transmembrane</keyword>
<keyword id="KW-1133">Transmembrane helix</keyword>
<dbReference type="EMBL" id="CP000553">
    <property type="protein sequence ID" value="ABM74915.1"/>
    <property type="molecule type" value="Genomic_DNA"/>
</dbReference>
<dbReference type="RefSeq" id="WP_011823118.1">
    <property type="nucleotide sequence ID" value="NC_008819.1"/>
</dbReference>
<dbReference type="SMR" id="A2C0A5"/>
<dbReference type="KEGG" id="pme:NATL1_03511"/>
<dbReference type="HOGENOM" id="CLU_174355_0_0_3"/>
<dbReference type="Proteomes" id="UP000002592">
    <property type="component" value="Chromosome"/>
</dbReference>
<dbReference type="GO" id="GO:0009539">
    <property type="term" value="C:photosystem II reaction center"/>
    <property type="evidence" value="ECO:0007669"/>
    <property type="project" value="InterPro"/>
</dbReference>
<dbReference type="GO" id="GO:0031676">
    <property type="term" value="C:plasma membrane-derived thylakoid membrane"/>
    <property type="evidence" value="ECO:0007669"/>
    <property type="project" value="UniProtKB-SubCell"/>
</dbReference>
<dbReference type="GO" id="GO:0015979">
    <property type="term" value="P:photosynthesis"/>
    <property type="evidence" value="ECO:0007669"/>
    <property type="project" value="UniProtKB-UniRule"/>
</dbReference>
<dbReference type="HAMAP" id="MF_00441">
    <property type="entry name" value="PSII_PsbK"/>
    <property type="match status" value="1"/>
</dbReference>
<dbReference type="InterPro" id="IPR003687">
    <property type="entry name" value="PSII_PsbK"/>
</dbReference>
<dbReference type="InterPro" id="IPR037270">
    <property type="entry name" value="PSII_PsbK_sf"/>
</dbReference>
<dbReference type="NCBIfam" id="NF002715">
    <property type="entry name" value="PRK02553.1"/>
    <property type="match status" value="1"/>
</dbReference>
<dbReference type="PANTHER" id="PTHR35325">
    <property type="match status" value="1"/>
</dbReference>
<dbReference type="PANTHER" id="PTHR35325:SF1">
    <property type="entry name" value="PHOTOSYSTEM II REACTION CENTER PROTEIN K"/>
    <property type="match status" value="1"/>
</dbReference>
<dbReference type="Pfam" id="PF02533">
    <property type="entry name" value="PsbK"/>
    <property type="match status" value="1"/>
</dbReference>
<dbReference type="SUPFAM" id="SSF161037">
    <property type="entry name" value="Photosystem II reaction center protein K, PsbK"/>
    <property type="match status" value="1"/>
</dbReference>
<name>PSBK_PROM1</name>
<comment type="function">
    <text evidence="1">One of the components of the core complex of photosystem II (PSII). PSII is a light-driven water:plastoquinone oxidoreductase that uses light energy to abstract electrons from H(2)O, generating O(2) and a proton gradient subsequently used for ATP formation. It consists of a core antenna complex that captures photons, and an electron transfer chain that converts photonic excitation into a charge separation.</text>
</comment>
<comment type="subunit">
    <text evidence="2">PSII is composed of 1 copy each of membrane proteins PsbA, PsbB, PsbC, PsbD, PsbE, PsbF, PsbH, PsbI, PsbJ, PsbK, PsbL, PsbM, PsbT, PsbX, PsbY, Psb30/Ycf12, peripheral proteins PsbO, CyanoQ (PsbQ), PsbU, PsbV and a large number of cofactors. It forms dimeric complexes.</text>
</comment>
<comment type="subcellular location">
    <subcellularLocation>
        <location evidence="1">Cellular thylakoid membrane</location>
        <topology evidence="1">Single-pass membrane protein</topology>
    </subcellularLocation>
</comment>
<comment type="similarity">
    <text evidence="1">Belongs to the PsbK family.</text>
</comment>
<accession>A2C0A5</accession>
<evidence type="ECO:0000255" key="1">
    <source>
        <dbReference type="HAMAP-Rule" id="MF_00441"/>
    </source>
</evidence>
<evidence type="ECO:0000305" key="2"/>
<sequence>MALINFDLLAELPVAYQAFAPTVDVLPLIPLFFFLLVFVWQAAVGFR</sequence>
<reference key="1">
    <citation type="journal article" date="2007" name="PLoS Genet.">
        <title>Patterns and implications of gene gain and loss in the evolution of Prochlorococcus.</title>
        <authorList>
            <person name="Kettler G.C."/>
            <person name="Martiny A.C."/>
            <person name="Huang K."/>
            <person name="Zucker J."/>
            <person name="Coleman M.L."/>
            <person name="Rodrigue S."/>
            <person name="Chen F."/>
            <person name="Lapidus A."/>
            <person name="Ferriera S."/>
            <person name="Johnson J."/>
            <person name="Steglich C."/>
            <person name="Church G.M."/>
            <person name="Richardson P."/>
            <person name="Chisholm S.W."/>
        </authorList>
    </citation>
    <scope>NUCLEOTIDE SEQUENCE [LARGE SCALE GENOMIC DNA]</scope>
    <source>
        <strain>NATL1A</strain>
    </source>
</reference>